<gene>
    <name type="ordered locus">BCG9842_B1177</name>
</gene>
<accession>B7IVJ7</accession>
<evidence type="ECO:0000255" key="1">
    <source>
        <dbReference type="HAMAP-Rule" id="MF_01851"/>
    </source>
</evidence>
<comment type="similarity">
    <text evidence="1">Belongs to the UPF0637 family.</text>
</comment>
<feature type="chain" id="PRO_1000188668" description="UPF0637 protein BCG9842_B1177">
    <location>
        <begin position="1"/>
        <end position="208"/>
    </location>
</feature>
<proteinExistence type="inferred from homology"/>
<sequence length="208" mass="24097">MTIQTFKSTDFDVFTVDGLEERMSAIKTNIHPKLEALGEQFAEYLSKHTDENFFYHVAKHARRKVNPPNDTWVAFSTNKRGYKMLPHFQIGLWGTHAFIYFGLIYECPQKVETAHAFLEHLNDLKTNIPNDFVWSIDHTKPSVKLHKTLETEDLQKMIERLATVKKAELLVGIHISPEEFSAMTNEQFLAKIESTMQPLLPLYALCNR</sequence>
<dbReference type="EMBL" id="CP001186">
    <property type="protein sequence ID" value="ACK97752.1"/>
    <property type="molecule type" value="Genomic_DNA"/>
</dbReference>
<dbReference type="RefSeq" id="WP_000155316.1">
    <property type="nucleotide sequence ID" value="NC_011772.1"/>
</dbReference>
<dbReference type="SMR" id="B7IVJ7"/>
<dbReference type="KEGG" id="bcg:BCG9842_B1177"/>
<dbReference type="HOGENOM" id="CLU_096059_0_0_9"/>
<dbReference type="Proteomes" id="UP000006744">
    <property type="component" value="Chromosome"/>
</dbReference>
<dbReference type="Gene3D" id="3.30.930.20">
    <property type="entry name" value="Protein of unknown function DUF1054"/>
    <property type="match status" value="1"/>
</dbReference>
<dbReference type="HAMAP" id="MF_01851">
    <property type="entry name" value="UPF0637"/>
    <property type="match status" value="1"/>
</dbReference>
<dbReference type="InterPro" id="IPR009403">
    <property type="entry name" value="UPF0637"/>
</dbReference>
<dbReference type="InterPro" id="IPR053707">
    <property type="entry name" value="UPF0637_domain_sf"/>
</dbReference>
<dbReference type="Pfam" id="PF06335">
    <property type="entry name" value="DUF1054"/>
    <property type="match status" value="1"/>
</dbReference>
<dbReference type="PIRSF" id="PIRSF021332">
    <property type="entry name" value="DUF1054"/>
    <property type="match status" value="1"/>
</dbReference>
<dbReference type="SUPFAM" id="SSF142913">
    <property type="entry name" value="YktB/PF0168-like"/>
    <property type="match status" value="1"/>
</dbReference>
<reference key="1">
    <citation type="submission" date="2008-10" db="EMBL/GenBank/DDBJ databases">
        <title>Genome sequence of Bacillus cereus G9842.</title>
        <authorList>
            <person name="Dodson R.J."/>
            <person name="Durkin A.S."/>
            <person name="Rosovitz M.J."/>
            <person name="Rasko D.A."/>
            <person name="Hoffmaster A."/>
            <person name="Ravel J."/>
            <person name="Sutton G."/>
        </authorList>
    </citation>
    <scope>NUCLEOTIDE SEQUENCE [LARGE SCALE GENOMIC DNA]</scope>
    <source>
        <strain>G9842</strain>
    </source>
</reference>
<protein>
    <recommendedName>
        <fullName evidence="1">UPF0637 protein BCG9842_B1177</fullName>
    </recommendedName>
</protein>
<organism>
    <name type="scientific">Bacillus cereus (strain G9842)</name>
    <dbReference type="NCBI Taxonomy" id="405531"/>
    <lineage>
        <taxon>Bacteria</taxon>
        <taxon>Bacillati</taxon>
        <taxon>Bacillota</taxon>
        <taxon>Bacilli</taxon>
        <taxon>Bacillales</taxon>
        <taxon>Bacillaceae</taxon>
        <taxon>Bacillus</taxon>
        <taxon>Bacillus cereus group</taxon>
    </lineage>
</organism>
<name>Y1177_BACC2</name>